<protein>
    <recommendedName>
        <fullName evidence="1">GMP reductase</fullName>
        <ecNumber evidence="1">1.7.1.7</ecNumber>
    </recommendedName>
    <alternativeName>
        <fullName evidence="1">Guanosine 5'-monophosphate oxidoreductase</fullName>
        <shortName evidence="1">Guanosine monophosphate reductase</shortName>
    </alternativeName>
</protein>
<keyword id="KW-0521">NADP</keyword>
<keyword id="KW-0560">Oxidoreductase</keyword>
<evidence type="ECO:0000255" key="1">
    <source>
        <dbReference type="HAMAP-Rule" id="MF_01511"/>
    </source>
</evidence>
<reference key="1">
    <citation type="journal article" date="2006" name="Proc. Natl. Acad. Sci. U.S.A.">
        <title>Comparative genomics of the lactic acid bacteria.</title>
        <authorList>
            <person name="Makarova K.S."/>
            <person name="Slesarev A."/>
            <person name="Wolf Y.I."/>
            <person name="Sorokin A."/>
            <person name="Mirkin B."/>
            <person name="Koonin E.V."/>
            <person name="Pavlov A."/>
            <person name="Pavlova N."/>
            <person name="Karamychev V."/>
            <person name="Polouchine N."/>
            <person name="Shakhova V."/>
            <person name="Grigoriev I."/>
            <person name="Lou Y."/>
            <person name="Rohksar D."/>
            <person name="Lucas S."/>
            <person name="Huang K."/>
            <person name="Goodstein D.M."/>
            <person name="Hawkins T."/>
            <person name="Plengvidhya V."/>
            <person name="Welker D."/>
            <person name="Hughes J."/>
            <person name="Goh Y."/>
            <person name="Benson A."/>
            <person name="Baldwin K."/>
            <person name="Lee J.-H."/>
            <person name="Diaz-Muniz I."/>
            <person name="Dosti B."/>
            <person name="Smeianov V."/>
            <person name="Wechter W."/>
            <person name="Barabote R."/>
            <person name="Lorca G."/>
            <person name="Altermann E."/>
            <person name="Barrangou R."/>
            <person name="Ganesan B."/>
            <person name="Xie Y."/>
            <person name="Rawsthorne H."/>
            <person name="Tamir D."/>
            <person name="Parker C."/>
            <person name="Breidt F."/>
            <person name="Broadbent J.R."/>
            <person name="Hutkins R."/>
            <person name="O'Sullivan D."/>
            <person name="Steele J."/>
            <person name="Unlu G."/>
            <person name="Saier M.H. Jr."/>
            <person name="Klaenhammer T."/>
            <person name="Richardson P."/>
            <person name="Kozyavkin S."/>
            <person name="Weimer B.C."/>
            <person name="Mills D.A."/>
        </authorList>
    </citation>
    <scope>NUCLEOTIDE SEQUENCE [LARGE SCALE GENOMIC DNA]</scope>
    <source>
        <strain>SK11</strain>
    </source>
</reference>
<feature type="chain" id="PRO_0000294276" description="GMP reductase">
    <location>
        <begin position="1"/>
        <end position="329"/>
    </location>
</feature>
<feature type="active site" description="Thioimidate intermediate" evidence="1">
    <location>
        <position position="178"/>
    </location>
</feature>
<feature type="binding site" evidence="1">
    <location>
        <begin position="207"/>
        <end position="230"/>
    </location>
    <ligand>
        <name>NADP(+)</name>
        <dbReference type="ChEBI" id="CHEBI:58349"/>
    </ligand>
</feature>
<dbReference type="EC" id="1.7.1.7" evidence="1"/>
<dbReference type="EMBL" id="CP000425">
    <property type="protein sequence ID" value="ABJ72784.1"/>
    <property type="molecule type" value="Genomic_DNA"/>
</dbReference>
<dbReference type="RefSeq" id="WP_011676256.1">
    <property type="nucleotide sequence ID" value="NC_008527.1"/>
</dbReference>
<dbReference type="SMR" id="Q02Z38"/>
<dbReference type="GeneID" id="61109390"/>
<dbReference type="KEGG" id="llc:LACR_1256"/>
<dbReference type="HOGENOM" id="CLU_022552_5_0_9"/>
<dbReference type="Proteomes" id="UP000000240">
    <property type="component" value="Chromosome"/>
</dbReference>
<dbReference type="GO" id="GO:0005829">
    <property type="term" value="C:cytosol"/>
    <property type="evidence" value="ECO:0007669"/>
    <property type="project" value="TreeGrafter"/>
</dbReference>
<dbReference type="GO" id="GO:1902560">
    <property type="term" value="C:GMP reductase complex"/>
    <property type="evidence" value="ECO:0007669"/>
    <property type="project" value="InterPro"/>
</dbReference>
<dbReference type="GO" id="GO:0003920">
    <property type="term" value="F:GMP reductase activity"/>
    <property type="evidence" value="ECO:0007669"/>
    <property type="project" value="UniProtKB-UniRule"/>
</dbReference>
<dbReference type="GO" id="GO:0006163">
    <property type="term" value="P:purine nucleotide metabolic process"/>
    <property type="evidence" value="ECO:0007669"/>
    <property type="project" value="UniProtKB-UniRule"/>
</dbReference>
<dbReference type="CDD" id="cd00381">
    <property type="entry name" value="IMPDH"/>
    <property type="match status" value="1"/>
</dbReference>
<dbReference type="Gene3D" id="3.20.20.70">
    <property type="entry name" value="Aldolase class I"/>
    <property type="match status" value="1"/>
</dbReference>
<dbReference type="HAMAP" id="MF_01511">
    <property type="entry name" value="GMP_reduct_type2"/>
    <property type="match status" value="1"/>
</dbReference>
<dbReference type="InterPro" id="IPR013785">
    <property type="entry name" value="Aldolase_TIM"/>
</dbReference>
<dbReference type="InterPro" id="IPR050139">
    <property type="entry name" value="GMP_reductase"/>
</dbReference>
<dbReference type="InterPro" id="IPR005994">
    <property type="entry name" value="GuaC_type_2"/>
</dbReference>
<dbReference type="InterPro" id="IPR015875">
    <property type="entry name" value="IMP_DH/GMP_Rdtase_CS"/>
</dbReference>
<dbReference type="InterPro" id="IPR001093">
    <property type="entry name" value="IMP_DH_GMPRt"/>
</dbReference>
<dbReference type="NCBIfam" id="TIGR01306">
    <property type="entry name" value="GMP_reduct_2"/>
    <property type="match status" value="1"/>
</dbReference>
<dbReference type="NCBIfam" id="NF003966">
    <property type="entry name" value="PRK05458.1"/>
    <property type="match status" value="1"/>
</dbReference>
<dbReference type="PANTHER" id="PTHR43170">
    <property type="entry name" value="GMP REDUCTASE"/>
    <property type="match status" value="1"/>
</dbReference>
<dbReference type="PANTHER" id="PTHR43170:SF5">
    <property type="entry name" value="GMP REDUCTASE"/>
    <property type="match status" value="1"/>
</dbReference>
<dbReference type="Pfam" id="PF00478">
    <property type="entry name" value="IMPDH"/>
    <property type="match status" value="1"/>
</dbReference>
<dbReference type="PIRSF" id="PIRSF036500">
    <property type="entry name" value="GMP_red_Firmic"/>
    <property type="match status" value="1"/>
</dbReference>
<dbReference type="SMART" id="SM01240">
    <property type="entry name" value="IMPDH"/>
    <property type="match status" value="1"/>
</dbReference>
<dbReference type="SUPFAM" id="SSF51412">
    <property type="entry name" value="Inosine monophosphate dehydrogenase (IMPDH)"/>
    <property type="match status" value="1"/>
</dbReference>
<dbReference type="PROSITE" id="PS00487">
    <property type="entry name" value="IMP_DH_GMP_RED"/>
    <property type="match status" value="1"/>
</dbReference>
<accession>Q02Z38</accession>
<gene>
    <name evidence="1" type="primary">guaC</name>
    <name type="ordered locus">LACR_1256</name>
</gene>
<comment type="function">
    <text evidence="1">Catalyzes the irreversible NADPH-dependent deamination of GMP to IMP. It functions in the conversion of nucleobase, nucleoside and nucleotide derivatives of G to A nucleotides, and in maintaining the intracellular balance of A and G nucleotides.</text>
</comment>
<comment type="catalytic activity">
    <reaction evidence="1">
        <text>IMP + NH4(+) + NADP(+) = GMP + NADPH + 2 H(+)</text>
        <dbReference type="Rhea" id="RHEA:17185"/>
        <dbReference type="ChEBI" id="CHEBI:15378"/>
        <dbReference type="ChEBI" id="CHEBI:28938"/>
        <dbReference type="ChEBI" id="CHEBI:57783"/>
        <dbReference type="ChEBI" id="CHEBI:58053"/>
        <dbReference type="ChEBI" id="CHEBI:58115"/>
        <dbReference type="ChEBI" id="CHEBI:58349"/>
        <dbReference type="EC" id="1.7.1.7"/>
    </reaction>
</comment>
<comment type="similarity">
    <text evidence="1">Belongs to the IMPDH/GMPR family. GuaC type 2 subfamily.</text>
</comment>
<name>GUAC_LACLS</name>
<sequence length="329" mass="35828">MNNLNSVFDYEDIQLIPNKCVINSRSEADTSVKLGNYTFKLPVVPANMQTIIDDKIAEMLAKEGYFYIMHRFEAENRAAFIKKMHKDGLIASISVGVKADEHAFIREISAEALIPEFITIDIAHGHADSVIKTIQLIKRLMPQTFVIAGNVGTPEAVRELENAGADATKVGIGPGKVCITKVKTGFGTGGWQLAAVKWCAKAASKPVIADGGIRTHGDIAKSIRMGATMVMVGSLFAAHEESPGQTVERDGQLFKEYFGSASEYQKGEHKNVEGKKILLPHKGSLKDTLKEMEEDLQSSISYAGGRDLSALTKVDYVVVKNSIWNGDAI</sequence>
<proteinExistence type="inferred from homology"/>
<organism>
    <name type="scientific">Lactococcus lactis subsp. cremoris (strain SK11)</name>
    <dbReference type="NCBI Taxonomy" id="272622"/>
    <lineage>
        <taxon>Bacteria</taxon>
        <taxon>Bacillati</taxon>
        <taxon>Bacillota</taxon>
        <taxon>Bacilli</taxon>
        <taxon>Lactobacillales</taxon>
        <taxon>Streptococcaceae</taxon>
        <taxon>Lactococcus</taxon>
        <taxon>Lactococcus cremoris subsp. cremoris</taxon>
    </lineage>
</organism>